<organism>
    <name type="scientific">Bacillus cereus (strain B4264)</name>
    <dbReference type="NCBI Taxonomy" id="405532"/>
    <lineage>
        <taxon>Bacteria</taxon>
        <taxon>Bacillati</taxon>
        <taxon>Bacillota</taxon>
        <taxon>Bacilli</taxon>
        <taxon>Bacillales</taxon>
        <taxon>Bacillaceae</taxon>
        <taxon>Bacillus</taxon>
        <taxon>Bacillus cereus group</taxon>
    </lineage>
</organism>
<feature type="chain" id="PRO_1000190454" description="33 kDa chaperonin">
    <location>
        <begin position="1"/>
        <end position="291"/>
    </location>
</feature>
<feature type="disulfide bond" description="Redox-active" evidence="1">
    <location>
        <begin position="237"/>
        <end position="239"/>
    </location>
</feature>
<feature type="disulfide bond" description="Redox-active" evidence="1">
    <location>
        <begin position="270"/>
        <end position="273"/>
    </location>
</feature>
<name>HSLO_BACC4</name>
<accession>B7HJ06</accession>
<evidence type="ECO:0000255" key="1">
    <source>
        <dbReference type="HAMAP-Rule" id="MF_00117"/>
    </source>
</evidence>
<sequence>MKDYLVKALAFDGEVRAYSVRTTNTVSEAQRRHDTWRTASAALGRSLTAGTMMGAMLKGEQKLTIKVEGNGPIGPILVDAHANGDVRGYVTNPHVDFEGTEQGKLRVYQAVGTEGFVTVIKDIGMREPFIGQSPIVSGELGEDFTYYFAVSEQTPSSVGVGVLVNGDDSILAAGGFILQIMPGAQDETISFIEDRLQKIPPVSTLIEQGLSPEELLYAVLGEDKVKVLETMDVQFNCTCSRERIESVLISLGKTELEQVREEEEETEVHCHFCNERYKFSKEDITNLIENL</sequence>
<proteinExistence type="inferred from homology"/>
<gene>
    <name evidence="1" type="primary">hslO</name>
    <name type="ordered locus">BCB4264_A0074</name>
</gene>
<reference key="1">
    <citation type="submission" date="2008-10" db="EMBL/GenBank/DDBJ databases">
        <title>Genome sequence of Bacillus cereus B4264.</title>
        <authorList>
            <person name="Dodson R.J."/>
            <person name="Durkin A.S."/>
            <person name="Rosovitz M.J."/>
            <person name="Rasko D.A."/>
            <person name="Hoffmaster A."/>
            <person name="Ravel J."/>
            <person name="Sutton G."/>
        </authorList>
    </citation>
    <scope>NUCLEOTIDE SEQUENCE [LARGE SCALE GENOMIC DNA]</scope>
    <source>
        <strain>B4264</strain>
    </source>
</reference>
<protein>
    <recommendedName>
        <fullName evidence="1">33 kDa chaperonin</fullName>
    </recommendedName>
    <alternativeName>
        <fullName evidence="1">Heat shock protein 33 homolog</fullName>
        <shortName evidence="1">HSP33</shortName>
    </alternativeName>
</protein>
<keyword id="KW-0143">Chaperone</keyword>
<keyword id="KW-0963">Cytoplasm</keyword>
<keyword id="KW-1015">Disulfide bond</keyword>
<keyword id="KW-0676">Redox-active center</keyword>
<keyword id="KW-0862">Zinc</keyword>
<comment type="function">
    <text evidence="1">Redox regulated molecular chaperone. Protects both thermally unfolding and oxidatively damaged proteins from irreversible aggregation. Plays an important role in the bacterial defense system toward oxidative stress.</text>
</comment>
<comment type="subcellular location">
    <subcellularLocation>
        <location evidence="1">Cytoplasm</location>
    </subcellularLocation>
</comment>
<comment type="PTM">
    <text evidence="1">Under oxidizing conditions two disulfide bonds are formed involving the reactive cysteines. Under reducing conditions zinc is bound to the reactive cysteines and the protein is inactive.</text>
</comment>
<comment type="similarity">
    <text evidence="1">Belongs to the HSP33 family.</text>
</comment>
<dbReference type="EMBL" id="CP001176">
    <property type="protein sequence ID" value="ACK58714.1"/>
    <property type="molecule type" value="Genomic_DNA"/>
</dbReference>
<dbReference type="RefSeq" id="WP_000656372.1">
    <property type="nucleotide sequence ID" value="NZ_VEHB01000020.1"/>
</dbReference>
<dbReference type="SMR" id="B7HJ06"/>
<dbReference type="KEGG" id="bcb:BCB4264_A0074"/>
<dbReference type="HOGENOM" id="CLU_054493_1_0_9"/>
<dbReference type="Proteomes" id="UP000007096">
    <property type="component" value="Chromosome"/>
</dbReference>
<dbReference type="GO" id="GO:0005737">
    <property type="term" value="C:cytoplasm"/>
    <property type="evidence" value="ECO:0007669"/>
    <property type="project" value="UniProtKB-SubCell"/>
</dbReference>
<dbReference type="GO" id="GO:0044183">
    <property type="term" value="F:protein folding chaperone"/>
    <property type="evidence" value="ECO:0007669"/>
    <property type="project" value="TreeGrafter"/>
</dbReference>
<dbReference type="GO" id="GO:0051082">
    <property type="term" value="F:unfolded protein binding"/>
    <property type="evidence" value="ECO:0007669"/>
    <property type="project" value="UniProtKB-UniRule"/>
</dbReference>
<dbReference type="GO" id="GO:0042026">
    <property type="term" value="P:protein refolding"/>
    <property type="evidence" value="ECO:0007669"/>
    <property type="project" value="TreeGrafter"/>
</dbReference>
<dbReference type="CDD" id="cd00498">
    <property type="entry name" value="Hsp33"/>
    <property type="match status" value="1"/>
</dbReference>
<dbReference type="Gene3D" id="3.55.30.10">
    <property type="entry name" value="Hsp33 domain"/>
    <property type="match status" value="1"/>
</dbReference>
<dbReference type="Gene3D" id="3.90.1280.10">
    <property type="entry name" value="HSP33 redox switch-like"/>
    <property type="match status" value="1"/>
</dbReference>
<dbReference type="HAMAP" id="MF_00117">
    <property type="entry name" value="HslO"/>
    <property type="match status" value="1"/>
</dbReference>
<dbReference type="InterPro" id="IPR000397">
    <property type="entry name" value="Heat_shock_Hsp33"/>
</dbReference>
<dbReference type="InterPro" id="IPR016154">
    <property type="entry name" value="Heat_shock_Hsp33_C"/>
</dbReference>
<dbReference type="InterPro" id="IPR016153">
    <property type="entry name" value="Heat_shock_Hsp33_N"/>
</dbReference>
<dbReference type="NCBIfam" id="NF001033">
    <property type="entry name" value="PRK00114.1"/>
    <property type="match status" value="1"/>
</dbReference>
<dbReference type="PANTHER" id="PTHR30111">
    <property type="entry name" value="33 KDA CHAPERONIN"/>
    <property type="match status" value="1"/>
</dbReference>
<dbReference type="PANTHER" id="PTHR30111:SF1">
    <property type="entry name" value="33 KDA CHAPERONIN"/>
    <property type="match status" value="1"/>
</dbReference>
<dbReference type="Pfam" id="PF01430">
    <property type="entry name" value="HSP33"/>
    <property type="match status" value="1"/>
</dbReference>
<dbReference type="PIRSF" id="PIRSF005261">
    <property type="entry name" value="Heat_shock_Hsp33"/>
    <property type="match status" value="1"/>
</dbReference>
<dbReference type="SUPFAM" id="SSF64397">
    <property type="entry name" value="Hsp33 domain"/>
    <property type="match status" value="1"/>
</dbReference>
<dbReference type="SUPFAM" id="SSF118352">
    <property type="entry name" value="HSP33 redox switch-like"/>
    <property type="match status" value="1"/>
</dbReference>